<gene>
    <name evidence="3" type="ORF">ZC21.6</name>
</gene>
<proteinExistence type="predicted"/>
<sequence>MIPPPPNTSSLTCTPEEESENYKAVENMFATLYFFLPFSAFAALLANVIYLIVVTVGIRKGKLPLKRYALTINRTCADIFTILVGTYFYMKQKMDRCDSHICLPVETDMSRYVLQVVFVLNYWCVSLSYSGIAVLTNYAVRAPLQYKVNLTSMKVAKYILMGWIALLFCFLLCILLVHQGELDYNSNSVIHLFLDDFDSDEFIGEWLVDLCNHIKSHPGSRSLIVTILPPIVFYCISVVSYVFIIHLLFSRRKVSSYHRHWGSMLRLGIHLILFAGTCALTGTAYLGSFSIGDICENYKTNEPMCLDPVVLYMWNTAAALIGWICRMVIDATVDTFNDDVLRRTFFNSIRHRLLTGPTNTANDTKLILNQIEISCNKTSTGPSRKTESVQMESLMKIKPSRSRRLKINAQKSATIIEENIA</sequence>
<feature type="chain" id="PRO_0000065494" description="Uncharacterized protein ZC21.6">
    <location>
        <begin position="1"/>
        <end position="421"/>
    </location>
</feature>
<feature type="splice variant" id="VSP_061055" description="In isoform a." evidence="1">
    <original>FNDDVLRRTFFNSIRHRLLTGPTNTANDTKLILNQIE</original>
    <variation>VDIACFFVFHTK</variation>
    <location>
        <begin position="336"/>
        <end position="372"/>
    </location>
</feature>
<dbReference type="EMBL" id="BX284603">
    <property type="protein sequence ID" value="CCD62574.2"/>
    <property type="molecule type" value="Genomic_DNA"/>
</dbReference>
<dbReference type="EMBL" id="BX284603">
    <property type="protein sequence ID" value="CCD62575.2"/>
    <property type="molecule type" value="Genomic_DNA"/>
</dbReference>
<dbReference type="PIR" id="S44871">
    <property type="entry name" value="S44871"/>
</dbReference>
<dbReference type="RefSeq" id="NP_001367403.1">
    <molecule id="P34590-2"/>
    <property type="nucleotide sequence ID" value="NM_001379838.1"/>
</dbReference>
<dbReference type="RefSeq" id="NP_001367404.1">
    <molecule id="P34590-1"/>
    <property type="nucleotide sequence ID" value="NM_001379836.1"/>
</dbReference>
<dbReference type="RefSeq" id="NP_498882.2">
    <property type="nucleotide sequence ID" value="NM_066481.4"/>
</dbReference>
<dbReference type="RefSeq" id="NP_871681.1">
    <property type="nucleotide sequence ID" value="NM_181952.4"/>
</dbReference>
<dbReference type="FunCoup" id="P34590">
    <property type="interactions" value="16"/>
</dbReference>
<dbReference type="PaxDb" id="6239-ZC21.6b"/>
<dbReference type="EnsemblMetazoa" id="ZC21.6a.1">
    <molecule id="P34590-2"/>
    <property type="protein sequence ID" value="ZC21.6a.1"/>
    <property type="gene ID" value="WBGene00022506"/>
</dbReference>
<dbReference type="EnsemblMetazoa" id="ZC21.6b.1">
    <molecule id="P34590-1"/>
    <property type="protein sequence ID" value="ZC21.6b.1"/>
    <property type="gene ID" value="WBGene00022506"/>
</dbReference>
<dbReference type="GeneID" id="191054"/>
<dbReference type="UCSC" id="ZC21.6b">
    <molecule id="P34590-1"/>
    <property type="organism name" value="c. elegans"/>
</dbReference>
<dbReference type="AGR" id="WB:WBGene00022506"/>
<dbReference type="WormBase" id="ZC21.6a">
    <molecule id="P34590-2"/>
    <property type="protein sequence ID" value="CE54098"/>
    <property type="gene ID" value="WBGene00022506"/>
</dbReference>
<dbReference type="WormBase" id="ZC21.6b">
    <molecule id="P34590-1"/>
    <property type="protein sequence ID" value="CE54055"/>
    <property type="gene ID" value="WBGene00022506"/>
</dbReference>
<dbReference type="eggNOG" id="ENOG502SRKB">
    <property type="taxonomic scope" value="Eukaryota"/>
</dbReference>
<dbReference type="HOGENOM" id="CLU_065656_0_0_1"/>
<dbReference type="InParanoid" id="P34590"/>
<dbReference type="OrthoDB" id="5796855at2759"/>
<dbReference type="PRO" id="PR:P34590"/>
<dbReference type="Proteomes" id="UP000001940">
    <property type="component" value="Chromosome III"/>
</dbReference>
<dbReference type="Bgee" id="WBGene00022506">
    <property type="expression patterns" value="Expressed in larva and 1 other cell type or tissue"/>
</dbReference>
<dbReference type="ExpressionAtlas" id="P34590">
    <property type="expression patterns" value="baseline"/>
</dbReference>
<dbReference type="Gene3D" id="1.20.1070.10">
    <property type="entry name" value="Rhodopsin 7-helix transmembrane proteins"/>
    <property type="match status" value="1"/>
</dbReference>
<dbReference type="SUPFAM" id="SSF81321">
    <property type="entry name" value="Family A G protein-coupled receptor-like"/>
    <property type="match status" value="1"/>
</dbReference>
<reference key="1">
    <citation type="journal article" date="1994" name="Nature">
        <title>2.2 Mb of contiguous nucleotide sequence from chromosome III of C. elegans.</title>
        <authorList>
            <person name="Wilson R."/>
            <person name="Ainscough R."/>
            <person name="Anderson K."/>
            <person name="Baynes C."/>
            <person name="Berks M."/>
            <person name="Bonfield J."/>
            <person name="Burton J."/>
            <person name="Connell M."/>
            <person name="Copsey T."/>
            <person name="Cooper J."/>
            <person name="Coulson A."/>
            <person name="Craxton M."/>
            <person name="Dear S."/>
            <person name="Du Z."/>
            <person name="Durbin R."/>
            <person name="Favello A."/>
            <person name="Fraser A."/>
            <person name="Fulton L."/>
            <person name="Gardner A."/>
            <person name="Green P."/>
            <person name="Hawkins T."/>
            <person name="Hillier L."/>
            <person name="Jier M."/>
            <person name="Johnston L."/>
            <person name="Jones M."/>
            <person name="Kershaw J."/>
            <person name="Kirsten J."/>
            <person name="Laisster N."/>
            <person name="Latreille P."/>
            <person name="Lightning J."/>
            <person name="Lloyd C."/>
            <person name="Mortimore B."/>
            <person name="O'Callaghan M."/>
            <person name="Parsons J."/>
            <person name="Percy C."/>
            <person name="Rifken L."/>
            <person name="Roopra A."/>
            <person name="Saunders D."/>
            <person name="Shownkeen R."/>
            <person name="Sims M."/>
            <person name="Smaldon N."/>
            <person name="Smith A."/>
            <person name="Smith M."/>
            <person name="Sonnhammer E."/>
            <person name="Staden R."/>
            <person name="Sulston J."/>
            <person name="Thierry-Mieg J."/>
            <person name="Thomas K."/>
            <person name="Vaudin M."/>
            <person name="Vaughan K."/>
            <person name="Waterston R."/>
            <person name="Watson A."/>
            <person name="Weinstock L."/>
            <person name="Wilkinson-Sproat J."/>
            <person name="Wohldman P."/>
        </authorList>
    </citation>
    <scope>NUCLEOTIDE SEQUENCE [LARGE SCALE GENOMIC DNA]</scope>
    <source>
        <strain>Bristol N2</strain>
    </source>
</reference>
<reference key="2">
    <citation type="journal article" date="1998" name="Science">
        <title>Genome sequence of the nematode C. elegans: a platform for investigating biology.</title>
        <authorList>
            <consortium name="The C. elegans sequencing consortium"/>
        </authorList>
    </citation>
    <scope>NUCLEOTIDE SEQUENCE [LARGE SCALE GENOMIC DNA]</scope>
    <source>
        <strain>Bristol N2</strain>
    </source>
</reference>
<name>YN56_CAEEL</name>
<keyword id="KW-0025">Alternative splicing</keyword>
<keyword id="KW-1185">Reference proteome</keyword>
<protein>
    <recommendedName>
        <fullName>Uncharacterized protein ZC21.6</fullName>
    </recommendedName>
</protein>
<evidence type="ECO:0000305" key="1"/>
<evidence type="ECO:0000312" key="2">
    <source>
        <dbReference type="WormBase" id="ZC21.6a"/>
    </source>
</evidence>
<evidence type="ECO:0000312" key="3">
    <source>
        <dbReference type="WormBase" id="ZC21.6b"/>
    </source>
</evidence>
<comment type="alternative products">
    <event type="alternative splicing"/>
    <isoform>
        <id>P34590-1</id>
        <name evidence="3">b</name>
        <sequence type="displayed"/>
    </isoform>
    <isoform>
        <id>P34590-2</id>
        <name evidence="2">a</name>
        <sequence type="described" ref="VSP_061055"/>
    </isoform>
</comment>
<organism>
    <name type="scientific">Caenorhabditis elegans</name>
    <dbReference type="NCBI Taxonomy" id="6239"/>
    <lineage>
        <taxon>Eukaryota</taxon>
        <taxon>Metazoa</taxon>
        <taxon>Ecdysozoa</taxon>
        <taxon>Nematoda</taxon>
        <taxon>Chromadorea</taxon>
        <taxon>Rhabditida</taxon>
        <taxon>Rhabditina</taxon>
        <taxon>Rhabditomorpha</taxon>
        <taxon>Rhabditoidea</taxon>
        <taxon>Rhabditidae</taxon>
        <taxon>Peloderinae</taxon>
        <taxon>Caenorhabditis</taxon>
    </lineage>
</organism>
<accession>P34590</accession>
<accession>H2KYD8</accession>